<name>PG193_VACCW</name>
<dbReference type="EMBL" id="D11079">
    <property type="protein sequence ID" value="BAA01838.1"/>
    <property type="molecule type" value="Genomic_DNA"/>
</dbReference>
<dbReference type="EMBL" id="M58056">
    <property type="protein sequence ID" value="AAA47967.1"/>
    <property type="molecule type" value="Genomic_DNA"/>
</dbReference>
<dbReference type="EMBL" id="AY243312">
    <property type="protein sequence ID" value="AAO89469.1"/>
    <property type="molecule type" value="Genomic_DNA"/>
</dbReference>
<dbReference type="PIR" id="JQ1802">
    <property type="entry name" value="JQ1802"/>
</dbReference>
<dbReference type="RefSeq" id="YP_233072.1">
    <property type="nucleotide sequence ID" value="NC_006998.1"/>
</dbReference>
<dbReference type="SMR" id="P24770"/>
<dbReference type="IntAct" id="P24770">
    <property type="interactions" value="1"/>
</dbReference>
<dbReference type="DNASU" id="3707661"/>
<dbReference type="GeneID" id="3707661"/>
<dbReference type="KEGG" id="vg:3707661"/>
<dbReference type="Proteomes" id="UP000000344">
    <property type="component" value="Genome"/>
</dbReference>
<dbReference type="GO" id="GO:0005615">
    <property type="term" value="C:extracellular space"/>
    <property type="evidence" value="ECO:0000314"/>
    <property type="project" value="UniProt"/>
</dbReference>
<dbReference type="GO" id="GO:0004896">
    <property type="term" value="F:cytokine receptor activity"/>
    <property type="evidence" value="ECO:0007669"/>
    <property type="project" value="InterPro"/>
</dbReference>
<dbReference type="GO" id="GO:0140319">
    <property type="term" value="F:receptor decoy activity"/>
    <property type="evidence" value="ECO:0000314"/>
    <property type="project" value="UniProt"/>
</dbReference>
<dbReference type="GO" id="GO:0052170">
    <property type="term" value="P:symbiont-mediated suppression of host innate immune response"/>
    <property type="evidence" value="ECO:0000314"/>
    <property type="project" value="UniProt"/>
</dbReference>
<dbReference type="GO" id="GO:0039502">
    <property type="term" value="P:symbiont-mediated suppression of host type I interferon-mediated signaling pathway"/>
    <property type="evidence" value="ECO:0007669"/>
    <property type="project" value="UniProtKB-KW"/>
</dbReference>
<dbReference type="GO" id="GO:0060333">
    <property type="term" value="P:type II interferon-mediated signaling pathway"/>
    <property type="evidence" value="ECO:0007669"/>
    <property type="project" value="InterPro"/>
</dbReference>
<dbReference type="FunFam" id="2.60.40.10:FF:002095">
    <property type="entry name" value="Gamma interferon receptor"/>
    <property type="match status" value="1"/>
</dbReference>
<dbReference type="Gene3D" id="6.10.140.1480">
    <property type="match status" value="1"/>
</dbReference>
<dbReference type="Gene3D" id="2.60.40.10">
    <property type="entry name" value="Immunoglobulins"/>
    <property type="match status" value="2"/>
</dbReference>
<dbReference type="InterPro" id="IPR054752">
    <property type="entry name" value="CR4_N"/>
</dbReference>
<dbReference type="InterPro" id="IPR036116">
    <property type="entry name" value="FN3_sf"/>
</dbReference>
<dbReference type="InterPro" id="IPR021126">
    <property type="entry name" value="IFN_gamma_rc_D2_pox/mammal"/>
</dbReference>
<dbReference type="InterPro" id="IPR013783">
    <property type="entry name" value="Ig-like_fold"/>
</dbReference>
<dbReference type="Pfam" id="PF22325">
    <property type="entry name" value="CR4_N"/>
    <property type="match status" value="1"/>
</dbReference>
<dbReference type="Pfam" id="PF07140">
    <property type="entry name" value="IFNGR1_D2"/>
    <property type="match status" value="1"/>
</dbReference>
<dbReference type="SUPFAM" id="SSF49265">
    <property type="entry name" value="Fibronectin type III"/>
    <property type="match status" value="2"/>
</dbReference>
<keyword id="KW-0244">Early protein</keyword>
<keyword id="KW-0325">Glycoprotein</keyword>
<keyword id="KW-0945">Host-virus interaction</keyword>
<keyword id="KW-1090">Inhibition of host innate immune response by virus</keyword>
<keyword id="KW-1114">Inhibition of host interferon signaling pathway by virus</keyword>
<keyword id="KW-0922">Interferon antiviral system evasion</keyword>
<keyword id="KW-1185">Reference proteome</keyword>
<keyword id="KW-0964">Secreted</keyword>
<keyword id="KW-0732">Signal</keyword>
<keyword id="KW-0899">Viral immunoevasion</keyword>
<organismHost>
    <name type="scientific">Bos taurus</name>
    <name type="common">Bovine</name>
    <dbReference type="NCBI Taxonomy" id="9913"/>
</organismHost>
<gene>
    <name type="primary">OPG193</name>
    <name type="ordered locus">VACWR190</name>
    <name type="ORF">B8R</name>
</gene>
<sequence length="272" mass="31159">MRYIIILAVLFINSIHAKITSYKFESVNFDSKIEWTGDGLYNISLKNYGIKTWQTMYTNVPEGTYDISAFPKNDFVSFWVKFEQGDYKVEEYCTGLCVEVKIGPPTVTLTEYDDHINLYIEHPYATRGSKKIPIYKRGDMCDIYLLYTANFTFGDSKEPVPYDIDDYDCTSTGCSIDFVTTEKVCVTAQGATEGFLEKITPWSSKVCLTPKKSVYTCAIRSKEDVPNFKDKMARVIKRKFNKQSQSYLTKFLGSTSNDVTTFLSMLNLTKYS</sequence>
<evidence type="ECO:0000255" key="1"/>
<evidence type="ECO:0000269" key="2">
    <source>
    </source>
</evidence>
<evidence type="ECO:0000269" key="3">
    <source>
    </source>
</evidence>
<evidence type="ECO:0000269" key="4">
    <source>
    </source>
</evidence>
<evidence type="ECO:0000305" key="5"/>
<reference key="1">
    <citation type="journal article" date="1991" name="J. Gen. Virol.">
        <title>Nucleotide sequence of 42 kbp of vaccinia virus strain WR from near the right inverted terminal repeat.</title>
        <authorList>
            <person name="Smith G.L."/>
            <person name="Chan Y.S."/>
            <person name="Howard S.T."/>
        </authorList>
    </citation>
    <scope>NUCLEOTIDE SEQUENCE [GENOMIC DNA]</scope>
</reference>
<reference key="2">
    <citation type="journal article" date="1991" name="Virology">
        <title>Vaccinia virus homologues of the Shope fibroma virus inverted terminal repeat proteins and a discontinuous ORF related to the tumor necrosis factor receptor family.</title>
        <authorList>
            <person name="Howard S.T."/>
            <person name="Chan Y.S."/>
            <person name="Smith G.L."/>
        </authorList>
    </citation>
    <scope>NUCLEOTIDE SEQUENCE [GENOMIC DNA]</scope>
</reference>
<reference key="3">
    <citation type="submission" date="2003-02" db="EMBL/GenBank/DDBJ databases">
        <title>Sequencing of the coding region of Vaccinia-WR to an average 9-fold redundancy and an error rate of 0.16/10kb.</title>
        <authorList>
            <person name="Esposito J.J."/>
            <person name="Frace A.M."/>
            <person name="Sammons S.A."/>
            <person name="Olsen-Rasmussen M."/>
            <person name="Osborne J."/>
            <person name="Wohlhueter R."/>
        </authorList>
    </citation>
    <scope>NUCLEOTIDE SEQUENCE [LARGE SCALE GENOMIC DNA]</scope>
</reference>
<reference key="4">
    <citation type="journal article" date="1995" name="J. Virol.">
        <title>Vaccinia, cowpox, and camelpox viruses encode soluble gamma interferon receptors with novel broad species specificity.</title>
        <authorList>
            <person name="Alcami A."/>
            <person name="Smith G.L."/>
        </authorList>
    </citation>
    <scope>INTERACTION WITH HOST IFNG</scope>
</reference>
<reference key="5">
    <citation type="journal article" date="1995" name="Virology">
        <title>Species specificity of ectromelia virus and vaccinia virus interferon-gamma binding proteins.</title>
        <authorList>
            <person name="Mossman K."/>
            <person name="Upton C."/>
            <person name="Buller R.M."/>
            <person name="McFadden G."/>
        </authorList>
    </citation>
    <scope>SUBCELLULAR LOCATION</scope>
    <scope>SUBUNIT</scope>
</reference>
<reference key="6">
    <citation type="journal article" date="2002" name="J. Gen. Virol.">
        <title>A study of the vaccinia virus interferon-gamma receptor and its contribution to virus virulence.</title>
        <authorList>
            <person name="Symons J.A."/>
            <person name="Tscharke D.C."/>
            <person name="Price N."/>
            <person name="Smith G.L."/>
        </authorList>
    </citation>
    <scope>FUNCTION</scope>
</reference>
<proteinExistence type="evidence at protein level"/>
<comment type="function">
    <text evidence="2">Counteracts the antiviral effects of host IFN-gamma. Acts as a soluble IFN-gamma receptor and thus inhibits the interaction between host IFN-gamma and its receptor.</text>
</comment>
<comment type="subunit">
    <text evidence="3 4">Homodimer. Interacts with host IFNG.</text>
</comment>
<comment type="subcellular location">
    <subcellularLocation>
        <location evidence="4">Secreted</location>
    </subcellularLocation>
</comment>
<comment type="induction">
    <text>Expressed in the early phase of the viral replicative cycle.</text>
</comment>
<comment type="similarity">
    <text evidence="5">Belongs to the type II cytokine receptor family.</text>
</comment>
<organism>
    <name type="scientific">Vaccinia virus (strain Western Reserve)</name>
    <name type="common">VACV</name>
    <name type="synonym">Vaccinia virus (strain WR)</name>
    <dbReference type="NCBI Taxonomy" id="10254"/>
    <lineage>
        <taxon>Viruses</taxon>
        <taxon>Varidnaviria</taxon>
        <taxon>Bamfordvirae</taxon>
        <taxon>Nucleocytoviricota</taxon>
        <taxon>Pokkesviricetes</taxon>
        <taxon>Chitovirales</taxon>
        <taxon>Poxviridae</taxon>
        <taxon>Chordopoxvirinae</taxon>
        <taxon>Orthopoxvirus</taxon>
        <taxon>Vaccinia virus</taxon>
    </lineage>
</organism>
<feature type="signal peptide" evidence="1">
    <location>
        <begin position="1"/>
        <end position="13"/>
    </location>
</feature>
<feature type="chain" id="PRO_0000040609" description="Soluble interferon gamma receptor OPG193">
    <location>
        <begin position="14"/>
        <end position="272"/>
    </location>
</feature>
<feature type="glycosylation site" description="N-linked (GlcNAc...) asparagine; by host" evidence="1">
    <location>
        <position position="42"/>
    </location>
</feature>
<feature type="glycosylation site" description="N-linked (GlcNAc...) asparagine; by host" evidence="1">
    <location>
        <position position="150"/>
    </location>
</feature>
<feature type="glycosylation site" description="N-linked (GlcNAc...) asparagine; by host" evidence="1">
    <location>
        <position position="267"/>
    </location>
</feature>
<accession>P24770</accession>
<accession>Q76ZL5</accession>
<protein>
    <recommendedName>
        <fullName>Soluble interferon gamma receptor OPG193</fullName>
        <shortName>B8</shortName>
    </recommendedName>
</protein>